<gene>
    <name evidence="1" type="primary">uppP</name>
    <name type="ordered locus">Athe_1834</name>
</gene>
<name>UPPP_CALBD</name>
<keyword id="KW-0046">Antibiotic resistance</keyword>
<keyword id="KW-1003">Cell membrane</keyword>
<keyword id="KW-0133">Cell shape</keyword>
<keyword id="KW-0961">Cell wall biogenesis/degradation</keyword>
<keyword id="KW-0378">Hydrolase</keyword>
<keyword id="KW-0472">Membrane</keyword>
<keyword id="KW-0573">Peptidoglycan synthesis</keyword>
<keyword id="KW-0812">Transmembrane</keyword>
<keyword id="KW-1133">Transmembrane helix</keyword>
<organism>
    <name type="scientific">Caldicellulosiruptor bescii (strain ATCC BAA-1888 / DSM 6725 / KCTC 15123 / Z-1320)</name>
    <name type="common">Anaerocellum thermophilum</name>
    <dbReference type="NCBI Taxonomy" id="521460"/>
    <lineage>
        <taxon>Bacteria</taxon>
        <taxon>Bacillati</taxon>
        <taxon>Bacillota</taxon>
        <taxon>Bacillota incertae sedis</taxon>
        <taxon>Caldicellulosiruptorales</taxon>
        <taxon>Caldicellulosiruptoraceae</taxon>
        <taxon>Caldicellulosiruptor</taxon>
    </lineage>
</organism>
<protein>
    <recommendedName>
        <fullName evidence="1">Undecaprenyl-diphosphatase</fullName>
        <ecNumber evidence="1">3.6.1.27</ecNumber>
    </recommendedName>
    <alternativeName>
        <fullName evidence="1">Bacitracin resistance protein</fullName>
    </alternativeName>
    <alternativeName>
        <fullName evidence="1">Undecaprenyl pyrophosphate phosphatase</fullName>
    </alternativeName>
</protein>
<accession>B9MKR9</accession>
<sequence>MTTFQAIFLGILQGLGEFLPISSSAHLIIFPWLFGWKEHSLVFDVALHLGTLLAVLVYFWKDYLDIVVQGIAKPKSEKGKLFWFIIVATIPGALFGYLFENIVEEVFRKQYLLIAIVLAVFGFILYYVDSIAKNKIELSKMNVFQAALIGVSQAFALFPGISRSGITMTTGLLLGLKKEAAAKFSFLMSAPIILGAGAVSLLKNINHVSAEFSNFAIGFFTSAVVGFLAIHFLLGIVKKSGFKIFAYYRFFLAAVILAFYLLRAV</sequence>
<feature type="chain" id="PRO_1000148799" description="Undecaprenyl-diphosphatase">
    <location>
        <begin position="1"/>
        <end position="265"/>
    </location>
</feature>
<feature type="transmembrane region" description="Helical" evidence="1">
    <location>
        <begin position="14"/>
        <end position="34"/>
    </location>
</feature>
<feature type="transmembrane region" description="Helical" evidence="1">
    <location>
        <begin position="40"/>
        <end position="60"/>
    </location>
</feature>
<feature type="transmembrane region" description="Helical" evidence="1">
    <location>
        <begin position="79"/>
        <end position="99"/>
    </location>
</feature>
<feature type="transmembrane region" description="Helical" evidence="1">
    <location>
        <begin position="112"/>
        <end position="132"/>
    </location>
</feature>
<feature type="transmembrane region" description="Helical" evidence="1">
    <location>
        <begin position="141"/>
        <end position="161"/>
    </location>
</feature>
<feature type="transmembrane region" description="Helical" evidence="1">
    <location>
        <begin position="182"/>
        <end position="202"/>
    </location>
</feature>
<feature type="transmembrane region" description="Helical" evidence="1">
    <location>
        <begin position="217"/>
        <end position="237"/>
    </location>
</feature>
<feature type="transmembrane region" description="Helical" evidence="1">
    <location>
        <begin position="242"/>
        <end position="262"/>
    </location>
</feature>
<proteinExistence type="inferred from homology"/>
<reference key="1">
    <citation type="submission" date="2009-01" db="EMBL/GenBank/DDBJ databases">
        <title>Complete sequence of chromosome of Caldicellulosiruptor becscii DSM 6725.</title>
        <authorList>
            <person name="Lucas S."/>
            <person name="Copeland A."/>
            <person name="Lapidus A."/>
            <person name="Glavina del Rio T."/>
            <person name="Tice H."/>
            <person name="Bruce D."/>
            <person name="Goodwin L."/>
            <person name="Pitluck S."/>
            <person name="Sims D."/>
            <person name="Meincke L."/>
            <person name="Brettin T."/>
            <person name="Detter J.C."/>
            <person name="Han C."/>
            <person name="Larimer F."/>
            <person name="Land M."/>
            <person name="Hauser L."/>
            <person name="Kyrpides N."/>
            <person name="Ovchinnikova G."/>
            <person name="Kataeva I."/>
            <person name="Adams M.W.W."/>
        </authorList>
    </citation>
    <scope>NUCLEOTIDE SEQUENCE [LARGE SCALE GENOMIC DNA]</scope>
    <source>
        <strain>ATCC BAA-1888 / DSM 6725 / KCTC 15123 / Z-1320</strain>
    </source>
</reference>
<comment type="function">
    <text evidence="1">Catalyzes the dephosphorylation of undecaprenyl diphosphate (UPP). Confers resistance to bacitracin.</text>
</comment>
<comment type="catalytic activity">
    <reaction evidence="1">
        <text>di-trans,octa-cis-undecaprenyl diphosphate + H2O = di-trans,octa-cis-undecaprenyl phosphate + phosphate + H(+)</text>
        <dbReference type="Rhea" id="RHEA:28094"/>
        <dbReference type="ChEBI" id="CHEBI:15377"/>
        <dbReference type="ChEBI" id="CHEBI:15378"/>
        <dbReference type="ChEBI" id="CHEBI:43474"/>
        <dbReference type="ChEBI" id="CHEBI:58405"/>
        <dbReference type="ChEBI" id="CHEBI:60392"/>
        <dbReference type="EC" id="3.6.1.27"/>
    </reaction>
</comment>
<comment type="subcellular location">
    <subcellularLocation>
        <location evidence="1">Cell membrane</location>
        <topology evidence="1">Multi-pass membrane protein</topology>
    </subcellularLocation>
</comment>
<comment type="miscellaneous">
    <text>Bacitracin is thought to be involved in the inhibition of peptidoglycan synthesis by sequestering undecaprenyl diphosphate, thereby reducing the pool of lipid carrier available.</text>
</comment>
<comment type="similarity">
    <text evidence="1">Belongs to the UppP family.</text>
</comment>
<dbReference type="EC" id="3.6.1.27" evidence="1"/>
<dbReference type="EMBL" id="CP001393">
    <property type="protein sequence ID" value="ACM60927.1"/>
    <property type="molecule type" value="Genomic_DNA"/>
</dbReference>
<dbReference type="RefSeq" id="WP_015908222.1">
    <property type="nucleotide sequence ID" value="NC_012034.1"/>
</dbReference>
<dbReference type="SMR" id="B9MKR9"/>
<dbReference type="STRING" id="521460.Athe_1834"/>
<dbReference type="GeneID" id="31773191"/>
<dbReference type="KEGG" id="ate:Athe_1834"/>
<dbReference type="eggNOG" id="COG1968">
    <property type="taxonomic scope" value="Bacteria"/>
</dbReference>
<dbReference type="HOGENOM" id="CLU_060296_1_0_9"/>
<dbReference type="Proteomes" id="UP000007723">
    <property type="component" value="Chromosome"/>
</dbReference>
<dbReference type="GO" id="GO:0005886">
    <property type="term" value="C:plasma membrane"/>
    <property type="evidence" value="ECO:0007669"/>
    <property type="project" value="UniProtKB-SubCell"/>
</dbReference>
<dbReference type="GO" id="GO:0050380">
    <property type="term" value="F:undecaprenyl-diphosphatase activity"/>
    <property type="evidence" value="ECO:0007669"/>
    <property type="project" value="UniProtKB-UniRule"/>
</dbReference>
<dbReference type="GO" id="GO:0071555">
    <property type="term" value="P:cell wall organization"/>
    <property type="evidence" value="ECO:0007669"/>
    <property type="project" value="UniProtKB-KW"/>
</dbReference>
<dbReference type="GO" id="GO:0009252">
    <property type="term" value="P:peptidoglycan biosynthetic process"/>
    <property type="evidence" value="ECO:0007669"/>
    <property type="project" value="UniProtKB-KW"/>
</dbReference>
<dbReference type="GO" id="GO:0008360">
    <property type="term" value="P:regulation of cell shape"/>
    <property type="evidence" value="ECO:0007669"/>
    <property type="project" value="UniProtKB-KW"/>
</dbReference>
<dbReference type="GO" id="GO:0046677">
    <property type="term" value="P:response to antibiotic"/>
    <property type="evidence" value="ECO:0007669"/>
    <property type="project" value="UniProtKB-UniRule"/>
</dbReference>
<dbReference type="HAMAP" id="MF_01006">
    <property type="entry name" value="Undec_diphosphatase"/>
    <property type="match status" value="1"/>
</dbReference>
<dbReference type="InterPro" id="IPR003824">
    <property type="entry name" value="UppP"/>
</dbReference>
<dbReference type="NCBIfam" id="TIGR00753">
    <property type="entry name" value="undec_PP_bacA"/>
    <property type="match status" value="1"/>
</dbReference>
<dbReference type="PANTHER" id="PTHR30622">
    <property type="entry name" value="UNDECAPRENYL-DIPHOSPHATASE"/>
    <property type="match status" value="1"/>
</dbReference>
<dbReference type="PANTHER" id="PTHR30622:SF4">
    <property type="entry name" value="UNDECAPRENYL-DIPHOSPHATASE"/>
    <property type="match status" value="1"/>
</dbReference>
<dbReference type="Pfam" id="PF02673">
    <property type="entry name" value="BacA"/>
    <property type="match status" value="1"/>
</dbReference>
<evidence type="ECO:0000255" key="1">
    <source>
        <dbReference type="HAMAP-Rule" id="MF_01006"/>
    </source>
</evidence>